<protein>
    <recommendedName>
        <fullName evidence="1">Exosome complex component Csl4</fullName>
    </recommendedName>
</protein>
<evidence type="ECO:0000255" key="1">
    <source>
        <dbReference type="HAMAP-Rule" id="MF_00975"/>
    </source>
</evidence>
<evidence type="ECO:0000269" key="2">
    <source>
    </source>
</evidence>
<evidence type="ECO:0000269" key="3">
    <source>
    </source>
</evidence>
<evidence type="ECO:0000305" key="4">
    <source>
    </source>
</evidence>
<evidence type="ECO:0000305" key="5">
    <source>
    </source>
</evidence>
<evidence type="ECO:0007829" key="6">
    <source>
        <dbReference type="PDB" id="2BA1"/>
    </source>
</evidence>
<evidence type="ECO:0007829" key="7">
    <source>
        <dbReference type="PDB" id="3M7N"/>
    </source>
</evidence>
<evidence type="ECO:0007829" key="8">
    <source>
        <dbReference type="PDB" id="3M85"/>
    </source>
</evidence>
<proteinExistence type="evidence at protein level"/>
<comment type="function">
    <text evidence="4 5">Non-catalytic component of the exosome, which is a complex involved in RNA degradation. Increases the RNA binding and the efficiency of RNA degradation. Helpful for the interaction of the exosome with A-poor RNAs (Probable).</text>
</comment>
<comment type="subunit">
    <text evidence="4 5">Component of the archaeal exosome complex. Forms a trimer of Rrp4 and/or Csl4 subunits. The trimer associates with a hexameric ring-like arrangement composed of 3 Rrp41-Rrp42 heterodimers. Interacts with DnaG (Probable).</text>
</comment>
<comment type="subcellular location">
    <subcellularLocation>
        <location evidence="1">Cytoplasm</location>
    </subcellularLocation>
</comment>
<comment type="domain">
    <text evidence="2">Contains an N-terminal domain that mediates interactions with the hexameric ring, a central S1 domain and a C-terminal zinc-ribbon domain.</text>
</comment>
<comment type="miscellaneous">
    <text evidence="4">The zinc ion has probably a structural role.</text>
</comment>
<comment type="similarity">
    <text evidence="1">Belongs to the CSL4 family.</text>
</comment>
<gene>
    <name evidence="1" type="primary">csl4</name>
    <name type="ordered locus">AF_0206</name>
</gene>
<reference key="1">
    <citation type="journal article" date="1997" name="Nature">
        <title>The complete genome sequence of the hyperthermophilic, sulphate-reducing archaeon Archaeoglobus fulgidus.</title>
        <authorList>
            <person name="Klenk H.-P."/>
            <person name="Clayton R.A."/>
            <person name="Tomb J.-F."/>
            <person name="White O."/>
            <person name="Nelson K.E."/>
            <person name="Ketchum K.A."/>
            <person name="Dodson R.J."/>
            <person name="Gwinn M.L."/>
            <person name="Hickey E.K."/>
            <person name="Peterson J.D."/>
            <person name="Richardson D.L."/>
            <person name="Kerlavage A.R."/>
            <person name="Graham D.E."/>
            <person name="Kyrpides N.C."/>
            <person name="Fleischmann R.D."/>
            <person name="Quackenbush J."/>
            <person name="Lee N.H."/>
            <person name="Sutton G.G."/>
            <person name="Gill S.R."/>
            <person name="Kirkness E.F."/>
            <person name="Dougherty B.A."/>
            <person name="McKenney K."/>
            <person name="Adams M.D."/>
            <person name="Loftus B.J."/>
            <person name="Peterson S.N."/>
            <person name="Reich C.I."/>
            <person name="McNeil L.K."/>
            <person name="Badger J.H."/>
            <person name="Glodek A."/>
            <person name="Zhou L."/>
            <person name="Overbeek R."/>
            <person name="Gocayne J.D."/>
            <person name="Weidman J.F."/>
            <person name="McDonald L.A."/>
            <person name="Utterback T.R."/>
            <person name="Cotton M.D."/>
            <person name="Spriggs T."/>
            <person name="Artiach P."/>
            <person name="Kaine B.P."/>
            <person name="Sykes S.M."/>
            <person name="Sadow P.W."/>
            <person name="D'Andrea K.P."/>
            <person name="Bowman C."/>
            <person name="Fujii C."/>
            <person name="Garland S.A."/>
            <person name="Mason T.M."/>
            <person name="Olsen G.J."/>
            <person name="Fraser C.M."/>
            <person name="Smith H.O."/>
            <person name="Woese C.R."/>
            <person name="Venter J.C."/>
        </authorList>
    </citation>
    <scope>NUCLEOTIDE SEQUENCE [LARGE SCALE GENOMIC DNA]</scope>
    <source>
        <strain>ATCC 49558 / DSM 4304 / JCM 9628 / NBRC 100126 / VC-16</strain>
    </source>
</reference>
<reference key="2">
    <citation type="journal article" date="2005" name="Mol. Cell">
        <title>Structural framework for the mechanism of archaeal exosomes in RNA processing.</title>
        <authorList>
            <person name="Buttner K."/>
            <person name="Wenig K."/>
            <person name="Hopfner K.P."/>
        </authorList>
    </citation>
    <scope>X-RAY CRYSTALLOGRAPHY (2.70 ANGSTROMS) IN COMPLEX WITH RRP41; RRP42 AND ZINC</scope>
    <scope>FUNCTION</scope>
    <scope>SUBUNIT</scope>
    <scope>DOMAIN</scope>
</reference>
<reference key="3">
    <citation type="journal article" date="2010" name="Nucleic Acids Res.">
        <title>Quantitative analysis of processive RNA degradation by the archaeal RNA exosome.</title>
        <authorList>
            <person name="Hartung S."/>
            <person name="Niederberger T."/>
            <person name="Hartung M."/>
            <person name="Tresch A."/>
            <person name="Hopfner K.P."/>
        </authorList>
    </citation>
    <scope>X-RAY CRYSTALLOGRAPHY (2.40 ANGSTROMS) IN COMPLEX WITH RRP41; RRP42 AND ZINC</scope>
    <scope>FUNCTION</scope>
    <scope>SUBUNIT</scope>
</reference>
<feature type="chain" id="PRO_0000424720" description="Exosome complex component Csl4">
    <location>
        <begin position="1"/>
        <end position="179"/>
    </location>
</feature>
<feature type="domain" description="S1 motif" evidence="1">
    <location>
        <begin position="58"/>
        <end position="137"/>
    </location>
</feature>
<feature type="binding site" evidence="1 2 3">
    <location>
        <position position="143"/>
    </location>
    <ligand>
        <name>Zn(2+)</name>
        <dbReference type="ChEBI" id="CHEBI:29105"/>
    </ligand>
</feature>
<feature type="binding site" evidence="1 2 3">
    <location>
        <position position="146"/>
    </location>
    <ligand>
        <name>Zn(2+)</name>
        <dbReference type="ChEBI" id="CHEBI:29105"/>
    </ligand>
</feature>
<feature type="binding site" evidence="1 2 3">
    <location>
        <position position="159"/>
    </location>
    <ligand>
        <name>Zn(2+)</name>
        <dbReference type="ChEBI" id="CHEBI:29105"/>
    </ligand>
</feature>
<feature type="binding site" evidence="1 2 3">
    <location>
        <position position="162"/>
    </location>
    <ligand>
        <name>Zn(2+)</name>
        <dbReference type="ChEBI" id="CHEBI:29105"/>
    </ligand>
</feature>
<feature type="strand" evidence="7">
    <location>
        <begin position="9"/>
        <end position="12"/>
    </location>
</feature>
<feature type="turn" evidence="7">
    <location>
        <begin position="13"/>
        <end position="15"/>
    </location>
</feature>
<feature type="strand" evidence="7">
    <location>
        <begin position="16"/>
        <end position="18"/>
    </location>
</feature>
<feature type="strand" evidence="7">
    <location>
        <begin position="22"/>
        <end position="25"/>
    </location>
</feature>
<feature type="strand" evidence="7">
    <location>
        <begin position="28"/>
        <end position="40"/>
    </location>
</feature>
<feature type="strand" evidence="7">
    <location>
        <begin position="43"/>
        <end position="50"/>
    </location>
</feature>
<feature type="strand" evidence="7">
    <location>
        <begin position="60"/>
        <end position="68"/>
    </location>
</feature>
<feature type="strand" evidence="7">
    <location>
        <begin position="70"/>
        <end position="80"/>
    </location>
</feature>
<feature type="strand" evidence="7">
    <location>
        <begin position="91"/>
        <end position="96"/>
    </location>
</feature>
<feature type="helix" evidence="7">
    <location>
        <begin position="97"/>
        <end position="99"/>
    </location>
</feature>
<feature type="helix" evidence="7">
    <location>
        <begin position="108"/>
        <end position="110"/>
    </location>
</feature>
<feature type="strand" evidence="7">
    <location>
        <begin position="117"/>
        <end position="124"/>
    </location>
</feature>
<feature type="turn" evidence="7">
    <location>
        <begin position="125"/>
        <end position="127"/>
    </location>
</feature>
<feature type="strand" evidence="7">
    <location>
        <begin position="128"/>
        <end position="130"/>
    </location>
</feature>
<feature type="strand" evidence="8">
    <location>
        <begin position="133"/>
        <end position="135"/>
    </location>
</feature>
<feature type="strand" evidence="7">
    <location>
        <begin position="137"/>
        <end position="140"/>
    </location>
</feature>
<feature type="turn" evidence="7">
    <location>
        <begin position="144"/>
        <end position="146"/>
    </location>
</feature>
<feature type="strand" evidence="6">
    <location>
        <begin position="151"/>
        <end position="153"/>
    </location>
</feature>
<feature type="strand" evidence="7">
    <location>
        <begin position="154"/>
        <end position="158"/>
    </location>
</feature>
<feature type="strand" evidence="7">
    <location>
        <begin position="160"/>
        <end position="162"/>
    </location>
</feature>
<feature type="turn" evidence="7">
    <location>
        <begin position="172"/>
        <end position="177"/>
    </location>
</feature>
<keyword id="KW-0002">3D-structure</keyword>
<keyword id="KW-0963">Cytoplasm</keyword>
<keyword id="KW-0271">Exosome</keyword>
<keyword id="KW-0479">Metal-binding</keyword>
<keyword id="KW-1185">Reference proteome</keyword>
<keyword id="KW-0862">Zinc</keyword>
<sequence length="179" mass="19597">MRFVMPGDRIGSAEEYVKGEGVYEEGGELFAAVAGKLIIKDRVAKVESISPIPEIVKGDVVLGRVVDLRNSIALIEVSSKKGENRGPSNRGIGILHVSNVDEGYVKEISEAVGYLDILKARVIGDNLRLSTKEEEMGVLRALCSNCKTEMVREGDILKCPECGRVEKRKISTDYGKGEW</sequence>
<accession>O30033</accession>
<dbReference type="EMBL" id="AE000782">
    <property type="protein sequence ID" value="AAB91036.1"/>
    <property type="molecule type" value="Genomic_DNA"/>
</dbReference>
<dbReference type="PIR" id="F69275">
    <property type="entry name" value="F69275"/>
</dbReference>
<dbReference type="RefSeq" id="WP_010877717.1">
    <property type="nucleotide sequence ID" value="NC_000917.1"/>
</dbReference>
<dbReference type="PDB" id="2BA1">
    <property type="method" value="X-ray"/>
    <property type="resolution" value="2.70 A"/>
    <property type="chains" value="A/B/C=1-179"/>
</dbReference>
<dbReference type="PDB" id="3M7N">
    <property type="method" value="X-ray"/>
    <property type="resolution" value="2.40 A"/>
    <property type="chains" value="A/B/C=1-179"/>
</dbReference>
<dbReference type="PDB" id="3M85">
    <property type="method" value="X-ray"/>
    <property type="resolution" value="3.00 A"/>
    <property type="chains" value="A/B/C=1-179"/>
</dbReference>
<dbReference type="PDBsum" id="2BA1"/>
<dbReference type="PDBsum" id="3M7N"/>
<dbReference type="PDBsum" id="3M85"/>
<dbReference type="SMR" id="O30033"/>
<dbReference type="STRING" id="224325.AF_0206"/>
<dbReference type="PaxDb" id="224325-AF_0206"/>
<dbReference type="EnsemblBacteria" id="AAB91036">
    <property type="protein sequence ID" value="AAB91036"/>
    <property type="gene ID" value="AF_0206"/>
</dbReference>
<dbReference type="KEGG" id="afu:AF_0206"/>
<dbReference type="eggNOG" id="arCOG00676">
    <property type="taxonomic scope" value="Archaea"/>
</dbReference>
<dbReference type="HOGENOM" id="CLU_067135_1_1_2"/>
<dbReference type="OrthoDB" id="6768at2157"/>
<dbReference type="PhylomeDB" id="O30033"/>
<dbReference type="EvolutionaryTrace" id="O30033"/>
<dbReference type="Proteomes" id="UP000002199">
    <property type="component" value="Chromosome"/>
</dbReference>
<dbReference type="GO" id="GO:0005737">
    <property type="term" value="C:cytoplasm"/>
    <property type="evidence" value="ECO:0007669"/>
    <property type="project" value="UniProtKB-SubCell"/>
</dbReference>
<dbReference type="GO" id="GO:0000178">
    <property type="term" value="C:exosome (RNase complex)"/>
    <property type="evidence" value="ECO:0007669"/>
    <property type="project" value="UniProtKB-KW"/>
</dbReference>
<dbReference type="GO" id="GO:0003723">
    <property type="term" value="F:RNA binding"/>
    <property type="evidence" value="ECO:0007669"/>
    <property type="project" value="InterPro"/>
</dbReference>
<dbReference type="GO" id="GO:0008270">
    <property type="term" value="F:zinc ion binding"/>
    <property type="evidence" value="ECO:0007669"/>
    <property type="project" value="UniProtKB-UniRule"/>
</dbReference>
<dbReference type="GO" id="GO:0006401">
    <property type="term" value="P:RNA catabolic process"/>
    <property type="evidence" value="ECO:0007669"/>
    <property type="project" value="UniProtKB-UniRule"/>
</dbReference>
<dbReference type="GO" id="GO:0006396">
    <property type="term" value="P:RNA processing"/>
    <property type="evidence" value="ECO:0007669"/>
    <property type="project" value="InterPro"/>
</dbReference>
<dbReference type="Gene3D" id="2.20.70.10">
    <property type="match status" value="1"/>
</dbReference>
<dbReference type="Gene3D" id="2.40.50.100">
    <property type="match status" value="1"/>
</dbReference>
<dbReference type="Gene3D" id="2.40.50.140">
    <property type="entry name" value="Nucleic acid-binding proteins"/>
    <property type="match status" value="1"/>
</dbReference>
<dbReference type="HAMAP" id="MF_00975">
    <property type="entry name" value="Exosome_Csl4"/>
    <property type="match status" value="1"/>
</dbReference>
<dbReference type="InterPro" id="IPR039771">
    <property type="entry name" value="Csl4"/>
</dbReference>
<dbReference type="InterPro" id="IPR019495">
    <property type="entry name" value="EXOSC1_C"/>
</dbReference>
<dbReference type="InterPro" id="IPR025721">
    <property type="entry name" value="Exosome_cplx_N_dom"/>
</dbReference>
<dbReference type="InterPro" id="IPR030850">
    <property type="entry name" value="Exosome_Csl4_arc"/>
</dbReference>
<dbReference type="InterPro" id="IPR012340">
    <property type="entry name" value="NA-bd_OB-fold"/>
</dbReference>
<dbReference type="InterPro" id="IPR003029">
    <property type="entry name" value="S1_domain"/>
</dbReference>
<dbReference type="NCBIfam" id="NF034126">
    <property type="entry name" value="PRK09521.1"/>
    <property type="match status" value="1"/>
</dbReference>
<dbReference type="PANTHER" id="PTHR12686">
    <property type="entry name" value="3'-5' EXORIBONUCLEASE CSL4-RELATED"/>
    <property type="match status" value="1"/>
</dbReference>
<dbReference type="PANTHER" id="PTHR12686:SF8">
    <property type="entry name" value="EXOSOME COMPLEX COMPONENT CSL4"/>
    <property type="match status" value="1"/>
</dbReference>
<dbReference type="Pfam" id="PF14382">
    <property type="entry name" value="ECR1_N"/>
    <property type="match status" value="1"/>
</dbReference>
<dbReference type="Pfam" id="PF10447">
    <property type="entry name" value="EXOSC1"/>
    <property type="match status" value="1"/>
</dbReference>
<dbReference type="SMART" id="SM00316">
    <property type="entry name" value="S1"/>
    <property type="match status" value="1"/>
</dbReference>
<dbReference type="SUPFAM" id="SSF50249">
    <property type="entry name" value="Nucleic acid-binding proteins"/>
    <property type="match status" value="1"/>
</dbReference>
<dbReference type="SUPFAM" id="SSF110324">
    <property type="entry name" value="Ribosomal L27 protein-like"/>
    <property type="match status" value="1"/>
</dbReference>
<organism>
    <name type="scientific">Archaeoglobus fulgidus (strain ATCC 49558 / DSM 4304 / JCM 9628 / NBRC 100126 / VC-16)</name>
    <dbReference type="NCBI Taxonomy" id="224325"/>
    <lineage>
        <taxon>Archaea</taxon>
        <taxon>Methanobacteriati</taxon>
        <taxon>Methanobacteriota</taxon>
        <taxon>Archaeoglobi</taxon>
        <taxon>Archaeoglobales</taxon>
        <taxon>Archaeoglobaceae</taxon>
        <taxon>Archaeoglobus</taxon>
    </lineage>
</organism>
<name>CSL4_ARCFU</name>